<name>AC4CH_YERPG</name>
<protein>
    <recommendedName>
        <fullName evidence="2">N(4)-acetylcytidine amidohydrolase</fullName>
        <shortName evidence="2">ac4C amidohydrolase</shortName>
        <ecNumber evidence="2">3.5.1.135</ecNumber>
    </recommendedName>
</protein>
<gene>
    <name type="ordered locus">YpAngola_A1631</name>
</gene>
<feature type="chain" id="PRO_1000131802" description="N(4)-acetylcytidine amidohydrolase">
    <location>
        <begin position="1"/>
        <end position="102"/>
    </location>
</feature>
<feature type="domain" description="ASCH" evidence="1">
    <location>
        <begin position="6"/>
        <end position="92"/>
    </location>
</feature>
<feature type="active site" description="Proton acceptor" evidence="2">
    <location>
        <position position="20"/>
    </location>
</feature>
<feature type="active site" description="Nucleophile" evidence="2">
    <location>
        <position position="23"/>
    </location>
</feature>
<feature type="active site" description="Proton donor" evidence="2">
    <location>
        <position position="73"/>
    </location>
</feature>
<comment type="function">
    <text evidence="2">Catalyzes the hydrolysis of N(4)-acetylcytidine (ac4C).</text>
</comment>
<comment type="catalytic activity">
    <reaction evidence="2">
        <text>N(4)-acetylcytidine + H2O = cytidine + acetate + H(+)</text>
        <dbReference type="Rhea" id="RHEA:62932"/>
        <dbReference type="ChEBI" id="CHEBI:15377"/>
        <dbReference type="ChEBI" id="CHEBI:15378"/>
        <dbReference type="ChEBI" id="CHEBI:17562"/>
        <dbReference type="ChEBI" id="CHEBI:30089"/>
        <dbReference type="ChEBI" id="CHEBI:70989"/>
        <dbReference type="EC" id="3.5.1.135"/>
    </reaction>
</comment>
<comment type="catalytic activity">
    <reaction evidence="2">
        <text>N(4)-acetyl-2'-deoxycytidine + H2O = 2'-deoxycytidine + acetate + H(+)</text>
        <dbReference type="Rhea" id="RHEA:62936"/>
        <dbReference type="ChEBI" id="CHEBI:15377"/>
        <dbReference type="ChEBI" id="CHEBI:15378"/>
        <dbReference type="ChEBI" id="CHEBI:15698"/>
        <dbReference type="ChEBI" id="CHEBI:30089"/>
        <dbReference type="ChEBI" id="CHEBI:146133"/>
        <dbReference type="EC" id="3.5.1.135"/>
    </reaction>
</comment>
<comment type="catalytic activity">
    <reaction evidence="2">
        <text>N(4)-acetylcytosine + H2O = cytosine + acetate + H(+)</text>
        <dbReference type="Rhea" id="RHEA:62940"/>
        <dbReference type="ChEBI" id="CHEBI:15377"/>
        <dbReference type="ChEBI" id="CHEBI:15378"/>
        <dbReference type="ChEBI" id="CHEBI:16040"/>
        <dbReference type="ChEBI" id="CHEBI:30089"/>
        <dbReference type="ChEBI" id="CHEBI:146134"/>
        <dbReference type="EC" id="3.5.1.135"/>
    </reaction>
</comment>
<comment type="similarity">
    <text evidence="2">Belongs to the N(4)-acetylcytidine amidohydrolase family.</text>
</comment>
<evidence type="ECO:0000255" key="1"/>
<evidence type="ECO:0000255" key="2">
    <source>
        <dbReference type="HAMAP-Rule" id="MF_00684"/>
    </source>
</evidence>
<proteinExistence type="inferred from homology"/>
<dbReference type="EC" id="3.5.1.135" evidence="2"/>
<dbReference type="EMBL" id="CP000901">
    <property type="protein sequence ID" value="ABX85460.1"/>
    <property type="molecule type" value="Genomic_DNA"/>
</dbReference>
<dbReference type="SMR" id="A9R5W6"/>
<dbReference type="KEGG" id="ypg:YpAngola_A1631"/>
<dbReference type="PATRIC" id="fig|349746.12.peg.2600"/>
<dbReference type="GO" id="GO:0005829">
    <property type="term" value="C:cytosol"/>
    <property type="evidence" value="ECO:0007669"/>
    <property type="project" value="TreeGrafter"/>
</dbReference>
<dbReference type="GO" id="GO:0016813">
    <property type="term" value="F:hydrolase activity, acting on carbon-nitrogen (but not peptide) bonds, in linear amidines"/>
    <property type="evidence" value="ECO:0007669"/>
    <property type="project" value="UniProtKB-UniRule"/>
</dbReference>
<dbReference type="GO" id="GO:0106251">
    <property type="term" value="F:N4-acetylcytidine amidohydrolase activity"/>
    <property type="evidence" value="ECO:0007669"/>
    <property type="project" value="RHEA"/>
</dbReference>
<dbReference type="CDD" id="cd06552">
    <property type="entry name" value="ASCH_yqfb_like"/>
    <property type="match status" value="1"/>
</dbReference>
<dbReference type="FunFam" id="2.30.130.30:FF:000001">
    <property type="entry name" value="UPF0267 protein YqfB"/>
    <property type="match status" value="1"/>
</dbReference>
<dbReference type="Gene3D" id="2.30.130.30">
    <property type="entry name" value="Hypothetical protein"/>
    <property type="match status" value="1"/>
</dbReference>
<dbReference type="HAMAP" id="MF_00684">
    <property type="entry name" value="ac4C_amidohydr"/>
    <property type="match status" value="1"/>
</dbReference>
<dbReference type="InterPro" id="IPR008314">
    <property type="entry name" value="AC4CH"/>
</dbReference>
<dbReference type="InterPro" id="IPR007374">
    <property type="entry name" value="ASCH_domain"/>
</dbReference>
<dbReference type="InterPro" id="IPR015947">
    <property type="entry name" value="PUA-like_sf"/>
</dbReference>
<dbReference type="NCBIfam" id="NF003443">
    <property type="entry name" value="PRK04980.1"/>
    <property type="match status" value="1"/>
</dbReference>
<dbReference type="PANTHER" id="PTHR38088">
    <property type="entry name" value="UCP029143 FAMILY PROTEIN"/>
    <property type="match status" value="1"/>
</dbReference>
<dbReference type="PANTHER" id="PTHR38088:SF2">
    <property type="entry name" value="UCP029143 FAMILY PROTEIN"/>
    <property type="match status" value="1"/>
</dbReference>
<dbReference type="Pfam" id="PF04266">
    <property type="entry name" value="ASCH"/>
    <property type="match status" value="1"/>
</dbReference>
<dbReference type="PIRSF" id="PIRSF029143">
    <property type="entry name" value="UCP029143"/>
    <property type="match status" value="1"/>
</dbReference>
<dbReference type="SMART" id="SM01022">
    <property type="entry name" value="ASCH"/>
    <property type="match status" value="1"/>
</dbReference>
<dbReference type="SUPFAM" id="SSF88697">
    <property type="entry name" value="PUA domain-like"/>
    <property type="match status" value="1"/>
</dbReference>
<accession>A9R5W6</accession>
<keyword id="KW-0378">Hydrolase</keyword>
<organism>
    <name type="scientific">Yersinia pestis bv. Antiqua (strain Angola)</name>
    <dbReference type="NCBI Taxonomy" id="349746"/>
    <lineage>
        <taxon>Bacteria</taxon>
        <taxon>Pseudomonadati</taxon>
        <taxon>Pseudomonadota</taxon>
        <taxon>Gammaproteobacteria</taxon>
        <taxon>Enterobacterales</taxon>
        <taxon>Yersiniaceae</taxon>
        <taxon>Yersinia</taxon>
    </lineage>
</organism>
<sequence length="102" mass="11852">MNREITFFGRFEADILADRKTITIRDSSESDFRSGEVLRVCRNEDGVFFCHIKVKSVTPVTLDGLSERHAEQENMSLDELKKVIKAIYPGLDRFYVIEFTRC</sequence>
<reference key="1">
    <citation type="journal article" date="2010" name="J. Bacteriol.">
        <title>Genome sequence of the deep-rooted Yersinia pestis strain Angola reveals new insights into the evolution and pangenome of the plague bacterium.</title>
        <authorList>
            <person name="Eppinger M."/>
            <person name="Worsham P.L."/>
            <person name="Nikolich M.P."/>
            <person name="Riley D.R."/>
            <person name="Sebastian Y."/>
            <person name="Mou S."/>
            <person name="Achtman M."/>
            <person name="Lindler L.E."/>
            <person name="Ravel J."/>
        </authorList>
    </citation>
    <scope>NUCLEOTIDE SEQUENCE [LARGE SCALE GENOMIC DNA]</scope>
    <source>
        <strain>Angola</strain>
    </source>
</reference>